<feature type="chain" id="PRO_0000138324" description="UvrABC system protein C">
    <location>
        <begin position="1"/>
        <end position="596"/>
    </location>
</feature>
<feature type="domain" description="GIY-YIG" evidence="1">
    <location>
        <begin position="14"/>
        <end position="91"/>
    </location>
</feature>
<feature type="domain" description="UVR" evidence="1">
    <location>
        <begin position="196"/>
        <end position="231"/>
    </location>
</feature>
<reference key="1">
    <citation type="journal article" date="2002" name="Nucleic Acids Res.">
        <title>Genome sequence of Oceanobacillus iheyensis isolated from the Iheya Ridge and its unexpected adaptive capabilities to extreme environments.</title>
        <authorList>
            <person name="Takami H."/>
            <person name="Takaki Y."/>
            <person name="Uchiyama I."/>
        </authorList>
    </citation>
    <scope>NUCLEOTIDE SEQUENCE [LARGE SCALE GENOMIC DNA]</scope>
    <source>
        <strain>DSM 14371 / CIP 107618 / JCM 11309 / KCTC 3954 / HTE831</strain>
    </source>
</reference>
<dbReference type="EMBL" id="BA000028">
    <property type="protein sequence ID" value="BAC14072.1"/>
    <property type="molecule type" value="Genomic_DNA"/>
</dbReference>
<dbReference type="RefSeq" id="WP_011066510.1">
    <property type="nucleotide sequence ID" value="NC_004193.1"/>
</dbReference>
<dbReference type="SMR" id="Q8CXB4"/>
<dbReference type="STRING" id="221109.gene:10734364"/>
<dbReference type="KEGG" id="oih:OB2116"/>
<dbReference type="eggNOG" id="COG0322">
    <property type="taxonomic scope" value="Bacteria"/>
</dbReference>
<dbReference type="HOGENOM" id="CLU_014841_3_2_9"/>
<dbReference type="OrthoDB" id="9804933at2"/>
<dbReference type="PhylomeDB" id="Q8CXB4"/>
<dbReference type="Proteomes" id="UP000000822">
    <property type="component" value="Chromosome"/>
</dbReference>
<dbReference type="GO" id="GO:0005737">
    <property type="term" value="C:cytoplasm"/>
    <property type="evidence" value="ECO:0007669"/>
    <property type="project" value="UniProtKB-SubCell"/>
</dbReference>
<dbReference type="GO" id="GO:0009380">
    <property type="term" value="C:excinuclease repair complex"/>
    <property type="evidence" value="ECO:0007669"/>
    <property type="project" value="InterPro"/>
</dbReference>
<dbReference type="GO" id="GO:0003677">
    <property type="term" value="F:DNA binding"/>
    <property type="evidence" value="ECO:0007669"/>
    <property type="project" value="UniProtKB-UniRule"/>
</dbReference>
<dbReference type="GO" id="GO:0009381">
    <property type="term" value="F:excinuclease ABC activity"/>
    <property type="evidence" value="ECO:0007669"/>
    <property type="project" value="UniProtKB-UniRule"/>
</dbReference>
<dbReference type="GO" id="GO:0006289">
    <property type="term" value="P:nucleotide-excision repair"/>
    <property type="evidence" value="ECO:0007669"/>
    <property type="project" value="UniProtKB-UniRule"/>
</dbReference>
<dbReference type="GO" id="GO:0009432">
    <property type="term" value="P:SOS response"/>
    <property type="evidence" value="ECO:0007669"/>
    <property type="project" value="UniProtKB-UniRule"/>
</dbReference>
<dbReference type="CDD" id="cd10434">
    <property type="entry name" value="GIY-YIG_UvrC_Cho"/>
    <property type="match status" value="1"/>
</dbReference>
<dbReference type="FunFam" id="3.30.420.340:FF:000002">
    <property type="entry name" value="UvrABC system protein C"/>
    <property type="match status" value="1"/>
</dbReference>
<dbReference type="FunFam" id="3.40.1440.10:FF:000001">
    <property type="entry name" value="UvrABC system protein C"/>
    <property type="match status" value="1"/>
</dbReference>
<dbReference type="Gene3D" id="1.10.150.20">
    <property type="entry name" value="5' to 3' exonuclease, C-terminal subdomain"/>
    <property type="match status" value="1"/>
</dbReference>
<dbReference type="Gene3D" id="3.40.1440.10">
    <property type="entry name" value="GIY-YIG endonuclease"/>
    <property type="match status" value="1"/>
</dbReference>
<dbReference type="Gene3D" id="4.10.860.10">
    <property type="entry name" value="UVR domain"/>
    <property type="match status" value="1"/>
</dbReference>
<dbReference type="Gene3D" id="3.30.420.340">
    <property type="entry name" value="UvrC, RNAse H endonuclease domain"/>
    <property type="match status" value="1"/>
</dbReference>
<dbReference type="HAMAP" id="MF_00203">
    <property type="entry name" value="UvrC"/>
    <property type="match status" value="1"/>
</dbReference>
<dbReference type="InterPro" id="IPR000305">
    <property type="entry name" value="GIY-YIG_endonuc"/>
</dbReference>
<dbReference type="InterPro" id="IPR035901">
    <property type="entry name" value="GIY-YIG_endonuc_sf"/>
</dbReference>
<dbReference type="InterPro" id="IPR047296">
    <property type="entry name" value="GIY-YIG_UvrC_Cho"/>
</dbReference>
<dbReference type="InterPro" id="IPR010994">
    <property type="entry name" value="RuvA_2-like"/>
</dbReference>
<dbReference type="InterPro" id="IPR001943">
    <property type="entry name" value="UVR_dom"/>
</dbReference>
<dbReference type="InterPro" id="IPR036876">
    <property type="entry name" value="UVR_dom_sf"/>
</dbReference>
<dbReference type="InterPro" id="IPR050066">
    <property type="entry name" value="UvrABC_protein_C"/>
</dbReference>
<dbReference type="InterPro" id="IPR004791">
    <property type="entry name" value="UvrC"/>
</dbReference>
<dbReference type="InterPro" id="IPR001162">
    <property type="entry name" value="UvrC_RNase_H_dom"/>
</dbReference>
<dbReference type="InterPro" id="IPR038476">
    <property type="entry name" value="UvrC_RNase_H_dom_sf"/>
</dbReference>
<dbReference type="NCBIfam" id="NF001824">
    <property type="entry name" value="PRK00558.1-5"/>
    <property type="match status" value="1"/>
</dbReference>
<dbReference type="NCBIfam" id="TIGR00194">
    <property type="entry name" value="uvrC"/>
    <property type="match status" value="1"/>
</dbReference>
<dbReference type="PANTHER" id="PTHR30562:SF1">
    <property type="entry name" value="UVRABC SYSTEM PROTEIN C"/>
    <property type="match status" value="1"/>
</dbReference>
<dbReference type="PANTHER" id="PTHR30562">
    <property type="entry name" value="UVRC/OXIDOREDUCTASE"/>
    <property type="match status" value="1"/>
</dbReference>
<dbReference type="Pfam" id="PF01541">
    <property type="entry name" value="GIY-YIG"/>
    <property type="match status" value="1"/>
</dbReference>
<dbReference type="Pfam" id="PF14520">
    <property type="entry name" value="HHH_5"/>
    <property type="match status" value="1"/>
</dbReference>
<dbReference type="Pfam" id="PF02151">
    <property type="entry name" value="UVR"/>
    <property type="match status" value="1"/>
</dbReference>
<dbReference type="Pfam" id="PF22920">
    <property type="entry name" value="UvrC_RNaseH"/>
    <property type="match status" value="1"/>
</dbReference>
<dbReference type="Pfam" id="PF08459">
    <property type="entry name" value="UvrC_RNaseH_dom"/>
    <property type="match status" value="1"/>
</dbReference>
<dbReference type="SMART" id="SM00465">
    <property type="entry name" value="GIYc"/>
    <property type="match status" value="1"/>
</dbReference>
<dbReference type="SUPFAM" id="SSF46600">
    <property type="entry name" value="C-terminal UvrC-binding domain of UvrB"/>
    <property type="match status" value="1"/>
</dbReference>
<dbReference type="SUPFAM" id="SSF82771">
    <property type="entry name" value="GIY-YIG endonuclease"/>
    <property type="match status" value="1"/>
</dbReference>
<dbReference type="SUPFAM" id="SSF47781">
    <property type="entry name" value="RuvA domain 2-like"/>
    <property type="match status" value="1"/>
</dbReference>
<dbReference type="PROSITE" id="PS50164">
    <property type="entry name" value="GIY_YIG"/>
    <property type="match status" value="1"/>
</dbReference>
<dbReference type="PROSITE" id="PS50151">
    <property type="entry name" value="UVR"/>
    <property type="match status" value="1"/>
</dbReference>
<dbReference type="PROSITE" id="PS50165">
    <property type="entry name" value="UVRC"/>
    <property type="match status" value="1"/>
</dbReference>
<sequence length="596" mass="69198">MNENIEKKLSILPQQPGCYLMKDKNGTVIYVGKSKKLRNRVRSYFRGANDRKTQRLVQEIRDFEYMVTSSEIEALILEMNLIKKYDPRYNVMLKDDKSYPYLKITSERHPRLIVTRRLKKDKGKYFGPYPNVIAARETKKLLDRMYPLRKCNNPSGRPCLYYHMGQCKACAENPPSVKEYQEIVQEISSFLQGGFKDIRKNLAGEMQKASEALNFERAKEIRDTIQHIDATMEQQKMTLTDQMDRDIFGYSYDKGWMCVQVFFIRQGKLIERDTSVFPFFDSPEETIVSFIGRFYLHENHLKPKQVLVPVGIDNELLAKVLEIQVHIPLRGRKKELVQLAVKNAEISLNEKFQLIEKDEERTIQAIEDLGEQLNIETPHRIEAFDNSNIQGTDPVSAMIVFEDGKPNKKEYRKYKIRDVKGPDDYDTMREVVRRRYSRVLKENLPLPDLIIVDGGKGQMSAALEVLEDELGLDIPLAGLAKDDRHKTSELLYGMPPIVVPLERQSQAFYLVQRIQDEVHRFAITFHRQLRGKSLFQSELDKIPGVGEKRRKLLLSHFKSINQIKKASIEDMRKLGIPSNIAELVLNHLNSPNDDET</sequence>
<protein>
    <recommendedName>
        <fullName evidence="1">UvrABC system protein C</fullName>
        <shortName evidence="1">Protein UvrC</shortName>
    </recommendedName>
    <alternativeName>
        <fullName evidence="1">Excinuclease ABC subunit C</fullName>
    </alternativeName>
</protein>
<evidence type="ECO:0000255" key="1">
    <source>
        <dbReference type="HAMAP-Rule" id="MF_00203"/>
    </source>
</evidence>
<comment type="function">
    <text evidence="1">The UvrABC repair system catalyzes the recognition and processing of DNA lesions. UvrC both incises the 5' and 3' sides of the lesion. The N-terminal half is responsible for the 3' incision and the C-terminal half is responsible for the 5' incision.</text>
</comment>
<comment type="subunit">
    <text evidence="1">Interacts with UvrB in an incision complex.</text>
</comment>
<comment type="subcellular location">
    <subcellularLocation>
        <location evidence="1">Cytoplasm</location>
    </subcellularLocation>
</comment>
<comment type="similarity">
    <text evidence="1">Belongs to the UvrC family.</text>
</comment>
<gene>
    <name evidence="1" type="primary">uvrC</name>
    <name type="ordered locus">OB2116</name>
</gene>
<organism>
    <name type="scientific">Oceanobacillus iheyensis (strain DSM 14371 / CIP 107618 / JCM 11309 / KCTC 3954 / HTE831)</name>
    <dbReference type="NCBI Taxonomy" id="221109"/>
    <lineage>
        <taxon>Bacteria</taxon>
        <taxon>Bacillati</taxon>
        <taxon>Bacillota</taxon>
        <taxon>Bacilli</taxon>
        <taxon>Bacillales</taxon>
        <taxon>Bacillaceae</taxon>
        <taxon>Oceanobacillus</taxon>
    </lineage>
</organism>
<proteinExistence type="inferred from homology"/>
<name>UVRC_OCEIH</name>
<accession>Q8CXB4</accession>
<keyword id="KW-0963">Cytoplasm</keyword>
<keyword id="KW-0227">DNA damage</keyword>
<keyword id="KW-0228">DNA excision</keyword>
<keyword id="KW-0234">DNA repair</keyword>
<keyword id="KW-0267">Excision nuclease</keyword>
<keyword id="KW-1185">Reference proteome</keyword>
<keyword id="KW-0742">SOS response</keyword>